<sequence>MSSASSKRSVMTLFSNKDDIYCHQVKIVLAEKGVLYENAEVDLQALPEDLMELNPYGTVPTLVDRDLVLFNSRIIMEYLDERFPHPPLMQVYPVSRAKDRLLMLRIEQDWYPTLAKAENGTEKEKTSALKQLKEELLGIAPIFQQMPYFMNEEFGLVDCYVAPLLWKLKHLGVEFTGTGSKAIKAYMERVFTRDSFLQSVGEAAPKNLMDDK</sequence>
<keyword id="KW-0002">3D-structure</keyword>
<keyword id="KW-1185">Reference proteome</keyword>
<comment type="function">
    <text evidence="1">Forms an equimolar complex with the RNA polymerase holoenzyme (RNAP) but not with the core enzyme.</text>
</comment>
<comment type="similarity">
    <text evidence="2">Belongs to the GST superfamily. HSP26 family.</text>
</comment>
<accession>P45207</accession>
<name>SSPA_HAEIN</name>
<dbReference type="EMBL" id="L42023">
    <property type="protein sequence ID" value="AAC23090.1"/>
    <property type="molecule type" value="Genomic_DNA"/>
</dbReference>
<dbReference type="PIR" id="E64123">
    <property type="entry name" value="E64123"/>
</dbReference>
<dbReference type="RefSeq" id="NP_439593.1">
    <property type="nucleotide sequence ID" value="NC_000907.1"/>
</dbReference>
<dbReference type="PDB" id="3LYK">
    <property type="method" value="X-ray"/>
    <property type="resolution" value="2.10 A"/>
    <property type="chains" value="A/B=12-212"/>
</dbReference>
<dbReference type="PDBsum" id="3LYK"/>
<dbReference type="SMR" id="P45207"/>
<dbReference type="STRING" id="71421.HI_1441"/>
<dbReference type="DNASU" id="950832"/>
<dbReference type="EnsemblBacteria" id="AAC23090">
    <property type="protein sequence ID" value="AAC23090"/>
    <property type="gene ID" value="HI_1441"/>
</dbReference>
<dbReference type="KEGG" id="hin:HI_1441"/>
<dbReference type="PATRIC" id="fig|71421.8.peg.1503"/>
<dbReference type="eggNOG" id="COG0625">
    <property type="taxonomic scope" value="Bacteria"/>
</dbReference>
<dbReference type="HOGENOM" id="CLU_011226_9_3_6"/>
<dbReference type="OrthoDB" id="9781431at2"/>
<dbReference type="PhylomeDB" id="P45207"/>
<dbReference type="BioCyc" id="HINF71421:G1GJ1-1467-MONOMER"/>
<dbReference type="EvolutionaryTrace" id="P45207"/>
<dbReference type="Proteomes" id="UP000000579">
    <property type="component" value="Chromosome"/>
</dbReference>
<dbReference type="GO" id="GO:0005737">
    <property type="term" value="C:cytoplasm"/>
    <property type="evidence" value="ECO:0000318"/>
    <property type="project" value="GO_Central"/>
</dbReference>
<dbReference type="CDD" id="cd03186">
    <property type="entry name" value="GST_C_SspA"/>
    <property type="match status" value="1"/>
</dbReference>
<dbReference type="CDD" id="cd03059">
    <property type="entry name" value="GST_N_SspA"/>
    <property type="match status" value="1"/>
</dbReference>
<dbReference type="Gene3D" id="1.20.1050.10">
    <property type="match status" value="1"/>
</dbReference>
<dbReference type="Gene3D" id="3.40.30.10">
    <property type="entry name" value="Glutaredoxin"/>
    <property type="match status" value="1"/>
</dbReference>
<dbReference type="InterPro" id="IPR010987">
    <property type="entry name" value="Glutathione-S-Trfase_C-like"/>
</dbReference>
<dbReference type="InterPro" id="IPR036282">
    <property type="entry name" value="Glutathione-S-Trfase_C_sf"/>
</dbReference>
<dbReference type="InterPro" id="IPR040079">
    <property type="entry name" value="Glutathione_S-Trfase"/>
</dbReference>
<dbReference type="InterPro" id="IPR004045">
    <property type="entry name" value="Glutathione_S-Trfase_N"/>
</dbReference>
<dbReference type="InterPro" id="IPR004046">
    <property type="entry name" value="GST_C"/>
</dbReference>
<dbReference type="InterPro" id="IPR050983">
    <property type="entry name" value="GST_Omega/HSP26"/>
</dbReference>
<dbReference type="InterPro" id="IPR034342">
    <property type="entry name" value="SspA_C"/>
</dbReference>
<dbReference type="InterPro" id="IPR034341">
    <property type="entry name" value="SspA_N"/>
</dbReference>
<dbReference type="InterPro" id="IPR036249">
    <property type="entry name" value="Thioredoxin-like_sf"/>
</dbReference>
<dbReference type="NCBIfam" id="NF007016">
    <property type="entry name" value="PRK09481.1"/>
    <property type="match status" value="1"/>
</dbReference>
<dbReference type="PANTHER" id="PTHR43968">
    <property type="match status" value="1"/>
</dbReference>
<dbReference type="PANTHER" id="PTHR43968:SF6">
    <property type="entry name" value="GLUTATHIONE S-TRANSFERASE OMEGA"/>
    <property type="match status" value="1"/>
</dbReference>
<dbReference type="Pfam" id="PF00043">
    <property type="entry name" value="GST_C"/>
    <property type="match status" value="1"/>
</dbReference>
<dbReference type="Pfam" id="PF02798">
    <property type="entry name" value="GST_N"/>
    <property type="match status" value="1"/>
</dbReference>
<dbReference type="SFLD" id="SFLDS00019">
    <property type="entry name" value="Glutathione_Transferase_(cytos"/>
    <property type="match status" value="1"/>
</dbReference>
<dbReference type="SFLD" id="SFLDG00358">
    <property type="entry name" value="Main_(cytGST)"/>
    <property type="match status" value="1"/>
</dbReference>
<dbReference type="SUPFAM" id="SSF47616">
    <property type="entry name" value="GST C-terminal domain-like"/>
    <property type="match status" value="1"/>
</dbReference>
<dbReference type="SUPFAM" id="SSF52833">
    <property type="entry name" value="Thioredoxin-like"/>
    <property type="match status" value="1"/>
</dbReference>
<dbReference type="PROSITE" id="PS50405">
    <property type="entry name" value="GST_CTER"/>
    <property type="match status" value="1"/>
</dbReference>
<dbReference type="PROSITE" id="PS50404">
    <property type="entry name" value="GST_NTER"/>
    <property type="match status" value="1"/>
</dbReference>
<protein>
    <recommendedName>
        <fullName>Stringent starvation protein A homolog</fullName>
    </recommendedName>
</protein>
<organism>
    <name type="scientific">Haemophilus influenzae (strain ATCC 51907 / DSM 11121 / KW20 / Rd)</name>
    <dbReference type="NCBI Taxonomy" id="71421"/>
    <lineage>
        <taxon>Bacteria</taxon>
        <taxon>Pseudomonadati</taxon>
        <taxon>Pseudomonadota</taxon>
        <taxon>Gammaproteobacteria</taxon>
        <taxon>Pasteurellales</taxon>
        <taxon>Pasteurellaceae</taxon>
        <taxon>Haemophilus</taxon>
    </lineage>
</organism>
<proteinExistence type="evidence at protein level"/>
<evidence type="ECO:0000250" key="1"/>
<evidence type="ECO:0000305" key="2"/>
<evidence type="ECO:0007829" key="3">
    <source>
        <dbReference type="PDB" id="3LYK"/>
    </source>
</evidence>
<reference key="1">
    <citation type="journal article" date="1995" name="Science">
        <title>Whole-genome random sequencing and assembly of Haemophilus influenzae Rd.</title>
        <authorList>
            <person name="Fleischmann R.D."/>
            <person name="Adams M.D."/>
            <person name="White O."/>
            <person name="Clayton R.A."/>
            <person name="Kirkness E.F."/>
            <person name="Kerlavage A.R."/>
            <person name="Bult C.J."/>
            <person name="Tomb J.-F."/>
            <person name="Dougherty B.A."/>
            <person name="Merrick J.M."/>
            <person name="McKenney K."/>
            <person name="Sutton G.G."/>
            <person name="FitzHugh W."/>
            <person name="Fields C.A."/>
            <person name="Gocayne J.D."/>
            <person name="Scott J.D."/>
            <person name="Shirley R."/>
            <person name="Liu L.-I."/>
            <person name="Glodek A."/>
            <person name="Kelley J.M."/>
            <person name="Weidman J.F."/>
            <person name="Phillips C.A."/>
            <person name="Spriggs T."/>
            <person name="Hedblom E."/>
            <person name="Cotton M.D."/>
            <person name="Utterback T.R."/>
            <person name="Hanna M.C."/>
            <person name="Nguyen D.T."/>
            <person name="Saudek D.M."/>
            <person name="Brandon R.C."/>
            <person name="Fine L.D."/>
            <person name="Fritchman J.L."/>
            <person name="Fuhrmann J.L."/>
            <person name="Geoghagen N.S.M."/>
            <person name="Gnehm C.L."/>
            <person name="McDonald L.A."/>
            <person name="Small K.V."/>
            <person name="Fraser C.M."/>
            <person name="Smith H.O."/>
            <person name="Venter J.C."/>
        </authorList>
    </citation>
    <scope>NUCLEOTIDE SEQUENCE [LARGE SCALE GENOMIC DNA]</scope>
    <source>
        <strain>ATCC 51907 / DSM 11121 / KW20 / Rd</strain>
    </source>
</reference>
<reference key="2">
    <citation type="submission" date="2010-03" db="PDB data bank">
        <title>Structure of stringent starvation protein a homolog from Haemophilus influenzae.</title>
        <authorList>
            <consortium name="New York structural genomix research consortium (NYSGXRC)"/>
        </authorList>
    </citation>
    <scope>X-RAY CRYSTALLOGRAPHY (2.1 ANGSTROMS) OF 8-212</scope>
</reference>
<feature type="chain" id="PRO_0000185880" description="Stringent starvation protein A homolog">
    <location>
        <begin position="1"/>
        <end position="212"/>
    </location>
</feature>
<feature type="domain" description="GST N-terminal">
    <location>
        <begin position="9"/>
        <end position="87"/>
    </location>
</feature>
<feature type="domain" description="GST C-terminal">
    <location>
        <begin position="92"/>
        <end position="212"/>
    </location>
</feature>
<feature type="strand" evidence="3">
    <location>
        <begin position="12"/>
        <end position="15"/>
    </location>
</feature>
<feature type="helix" evidence="3">
    <location>
        <begin position="20"/>
        <end position="32"/>
    </location>
</feature>
<feature type="strand" evidence="3">
    <location>
        <begin position="37"/>
        <end position="40"/>
    </location>
</feature>
<feature type="helix" evidence="3">
    <location>
        <begin position="48"/>
        <end position="53"/>
    </location>
</feature>
<feature type="strand" evidence="3">
    <location>
        <begin position="61"/>
        <end position="64"/>
    </location>
</feature>
<feature type="strand" evidence="3">
    <location>
        <begin position="67"/>
        <end position="71"/>
    </location>
</feature>
<feature type="helix" evidence="3">
    <location>
        <begin position="72"/>
        <end position="82"/>
    </location>
</feature>
<feature type="helix" evidence="3">
    <location>
        <begin position="93"/>
        <end position="109"/>
    </location>
</feature>
<feature type="helix" evidence="3">
    <location>
        <begin position="111"/>
        <end position="119"/>
    </location>
</feature>
<feature type="helix" evidence="3">
    <location>
        <begin position="122"/>
        <end position="138"/>
    </location>
</feature>
<feature type="helix" evidence="3">
    <location>
        <begin position="140"/>
        <end position="145"/>
    </location>
</feature>
<feature type="strand" evidence="3">
    <location>
        <begin position="146"/>
        <end position="148"/>
    </location>
</feature>
<feature type="strand" evidence="3">
    <location>
        <begin position="151"/>
        <end position="153"/>
    </location>
</feature>
<feature type="helix" evidence="3">
    <location>
        <begin position="156"/>
        <end position="169"/>
    </location>
</feature>
<feature type="turn" evidence="3">
    <location>
        <begin position="170"/>
        <end position="172"/>
    </location>
</feature>
<feature type="helix" evidence="3">
    <location>
        <begin position="180"/>
        <end position="191"/>
    </location>
</feature>
<feature type="helix" evidence="3">
    <location>
        <begin position="194"/>
        <end position="199"/>
    </location>
</feature>
<gene>
    <name type="primary">sspA</name>
    <name type="ordered locus">HI_1441</name>
</gene>